<protein>
    <recommendedName>
        <fullName evidence="8">Transcription factor atoh7</fullName>
    </recommendedName>
    <alternativeName>
        <fullName evidence="2">Atonal bHLH transcription factor 7</fullName>
    </alternativeName>
    <alternativeName>
        <fullName evidence="8">Helix-loop-helix protein zATH-5</fullName>
        <shortName evidence="8">zATH5</shortName>
    </alternativeName>
    <alternativeName>
        <fullName evidence="8">Protein atonal homolog 5</fullName>
    </alternativeName>
    <alternativeName>
        <fullName evidence="1">Protein atonal homolog 7</fullName>
    </alternativeName>
    <alternativeName>
        <fullName evidence="7">Protein lakritz</fullName>
    </alternativeName>
</protein>
<accession>Q8AW52</accession>
<accession>Q9DGA9</accession>
<sequence>MKPRRPSCADSGSDSDSRDPEKFESAMRRRMAANARERKRMQGLNTAFDRLRKVVPQWGQDKKLSKYETLQMALSYIMALNRILSDAGRHVDPQKDWLNLQFDGLQTEGYFMHYDSPVESDCMLSSFSYHYESL</sequence>
<keyword id="KW-0966">Cell projection</keyword>
<keyword id="KW-0217">Developmental protein</keyword>
<keyword id="KW-0221">Differentiation</keyword>
<keyword id="KW-0238">DNA-binding</keyword>
<keyword id="KW-0524">Neurogenesis</keyword>
<keyword id="KW-0539">Nucleus</keyword>
<keyword id="KW-1185">Reference proteome</keyword>
<keyword id="KW-0804">Transcription</keyword>
<keyword id="KW-0805">Transcription regulation</keyword>
<gene>
    <name evidence="2" type="primary">atoh7</name>
    <name evidence="8" type="synonym">ath5</name>
    <name evidence="7" type="synonym">lak</name>
    <name type="ORF">si:packtrz.1</name>
</gene>
<dbReference type="EMBL" id="AB049457">
    <property type="protein sequence ID" value="BAB15953.1"/>
    <property type="molecule type" value="mRNA"/>
</dbReference>
<dbReference type="EMBL" id="AL627094">
    <property type="protein sequence ID" value="CAD52125.1"/>
    <property type="molecule type" value="Genomic_DNA"/>
</dbReference>
<dbReference type="EMBL" id="BC071520">
    <property type="protein sequence ID" value="AAH71520.1"/>
    <property type="molecule type" value="mRNA"/>
</dbReference>
<dbReference type="RefSeq" id="NP_571707.1">
    <property type="nucleotide sequence ID" value="NM_131632.1"/>
</dbReference>
<dbReference type="SMR" id="Q8AW52"/>
<dbReference type="FunCoup" id="Q8AW52">
    <property type="interactions" value="93"/>
</dbReference>
<dbReference type="STRING" id="7955.ENSDARP00000092102"/>
<dbReference type="PaxDb" id="7955-ENSDARP00000092102"/>
<dbReference type="Ensembl" id="ENSDART00000101328">
    <property type="protein sequence ID" value="ENSDARP00000092102"/>
    <property type="gene ID" value="ENSDARG00000069552"/>
</dbReference>
<dbReference type="GeneID" id="58216"/>
<dbReference type="KEGG" id="dre:58216"/>
<dbReference type="AGR" id="ZFIN:ZDB-GENE-000926-1"/>
<dbReference type="CTD" id="220202"/>
<dbReference type="ZFIN" id="ZDB-GENE-000926-1">
    <property type="gene designation" value="atoh7"/>
</dbReference>
<dbReference type="eggNOG" id="KOG4395">
    <property type="taxonomic scope" value="Eukaryota"/>
</dbReference>
<dbReference type="HOGENOM" id="CLU_145503_0_0_1"/>
<dbReference type="InParanoid" id="Q8AW52"/>
<dbReference type="OMA" id="YPCLMRY"/>
<dbReference type="OrthoDB" id="6161578at2759"/>
<dbReference type="PhylomeDB" id="Q8AW52"/>
<dbReference type="TreeFam" id="TF315153"/>
<dbReference type="PRO" id="PR:Q8AW52"/>
<dbReference type="Proteomes" id="UP000000437">
    <property type="component" value="Chromosome 13"/>
</dbReference>
<dbReference type="Bgee" id="ENSDARG00000069552">
    <property type="expression patterns" value="Expressed in optic cup and 6 other cell types or tissues"/>
</dbReference>
<dbReference type="GO" id="GO:0030424">
    <property type="term" value="C:axon"/>
    <property type="evidence" value="ECO:0000250"/>
    <property type="project" value="UniProtKB"/>
</dbReference>
<dbReference type="GO" id="GO:0005634">
    <property type="term" value="C:nucleus"/>
    <property type="evidence" value="ECO:0000250"/>
    <property type="project" value="UniProtKB"/>
</dbReference>
<dbReference type="GO" id="GO:0043204">
    <property type="term" value="C:perikaryon"/>
    <property type="evidence" value="ECO:0000250"/>
    <property type="project" value="UniProtKB"/>
</dbReference>
<dbReference type="GO" id="GO:0000981">
    <property type="term" value="F:DNA-binding transcription factor activity, RNA polymerase II-specific"/>
    <property type="evidence" value="ECO:0000318"/>
    <property type="project" value="GO_Central"/>
</dbReference>
<dbReference type="GO" id="GO:0070888">
    <property type="term" value="F:E-box binding"/>
    <property type="evidence" value="ECO:0000318"/>
    <property type="project" value="GO_Central"/>
</dbReference>
<dbReference type="GO" id="GO:0046983">
    <property type="term" value="F:protein dimerization activity"/>
    <property type="evidence" value="ECO:0007669"/>
    <property type="project" value="InterPro"/>
</dbReference>
<dbReference type="GO" id="GO:0000976">
    <property type="term" value="F:transcription cis-regulatory region binding"/>
    <property type="evidence" value="ECO:0000250"/>
    <property type="project" value="UniProtKB"/>
</dbReference>
<dbReference type="GO" id="GO:0061564">
    <property type="term" value="P:axon development"/>
    <property type="evidence" value="ECO:0000318"/>
    <property type="project" value="GO_Central"/>
</dbReference>
<dbReference type="GO" id="GO:0043010">
    <property type="term" value="P:camera-type eye development"/>
    <property type="evidence" value="ECO:0000315"/>
    <property type="project" value="ZFIN"/>
</dbReference>
<dbReference type="GO" id="GO:0045165">
    <property type="term" value="P:cell fate commitment"/>
    <property type="evidence" value="ECO:0000315"/>
    <property type="project" value="ZFIN"/>
</dbReference>
<dbReference type="GO" id="GO:0001654">
    <property type="term" value="P:eye development"/>
    <property type="evidence" value="ECO:0000315"/>
    <property type="project" value="ZFIN"/>
</dbReference>
<dbReference type="GO" id="GO:0003407">
    <property type="term" value="P:neural retina development"/>
    <property type="evidence" value="ECO:0000315"/>
    <property type="project" value="ZFIN"/>
</dbReference>
<dbReference type="GO" id="GO:0048663">
    <property type="term" value="P:neuron fate commitment"/>
    <property type="evidence" value="ECO:0000318"/>
    <property type="project" value="GO_Central"/>
</dbReference>
<dbReference type="GO" id="GO:0043473">
    <property type="term" value="P:pigmentation"/>
    <property type="evidence" value="ECO:0000315"/>
    <property type="project" value="ZFIN"/>
</dbReference>
<dbReference type="GO" id="GO:0050769">
    <property type="term" value="P:positive regulation of neurogenesis"/>
    <property type="evidence" value="ECO:0000315"/>
    <property type="project" value="ZFIN"/>
</dbReference>
<dbReference type="GO" id="GO:1902336">
    <property type="term" value="P:positive regulation of retinal ganglion cell axon guidance"/>
    <property type="evidence" value="ECO:0000250"/>
    <property type="project" value="UniProtKB"/>
</dbReference>
<dbReference type="GO" id="GO:0045944">
    <property type="term" value="P:positive regulation of transcription by RNA polymerase II"/>
    <property type="evidence" value="ECO:0000318"/>
    <property type="project" value="GO_Central"/>
</dbReference>
<dbReference type="GO" id="GO:0051726">
    <property type="term" value="P:regulation of cell cycle"/>
    <property type="evidence" value="ECO:0000315"/>
    <property type="project" value="ZFIN"/>
</dbReference>
<dbReference type="GO" id="GO:0007346">
    <property type="term" value="P:regulation of mitotic cell cycle"/>
    <property type="evidence" value="ECO:0000315"/>
    <property type="project" value="ZFIN"/>
</dbReference>
<dbReference type="GO" id="GO:0006357">
    <property type="term" value="P:regulation of transcription by RNA polymerase II"/>
    <property type="evidence" value="ECO:0000250"/>
    <property type="project" value="UniProtKB"/>
</dbReference>
<dbReference type="GO" id="GO:0060041">
    <property type="term" value="P:retina development in camera-type eye"/>
    <property type="evidence" value="ECO:0000315"/>
    <property type="project" value="ZFIN"/>
</dbReference>
<dbReference type="GO" id="GO:0010842">
    <property type="term" value="P:retina layer formation"/>
    <property type="evidence" value="ECO:0000315"/>
    <property type="project" value="ZFIN"/>
</dbReference>
<dbReference type="GO" id="GO:0007423">
    <property type="term" value="P:sensory organ development"/>
    <property type="evidence" value="ECO:0000318"/>
    <property type="project" value="GO_Central"/>
</dbReference>
<dbReference type="GO" id="GO:0036269">
    <property type="term" value="P:swimming behavior"/>
    <property type="evidence" value="ECO:0000315"/>
    <property type="project" value="ZFIN"/>
</dbReference>
<dbReference type="CDD" id="cd19714">
    <property type="entry name" value="bHLH_TS_ATOH7"/>
    <property type="match status" value="1"/>
</dbReference>
<dbReference type="FunFam" id="4.10.280.10:FF:000025">
    <property type="entry name" value="protein atonal homolog 7"/>
    <property type="match status" value="1"/>
</dbReference>
<dbReference type="Gene3D" id="4.10.280.10">
    <property type="entry name" value="Helix-loop-helix DNA-binding domain"/>
    <property type="match status" value="1"/>
</dbReference>
<dbReference type="InterPro" id="IPR032663">
    <property type="entry name" value="ATOH7_bHLH"/>
</dbReference>
<dbReference type="InterPro" id="IPR011598">
    <property type="entry name" value="bHLH_dom"/>
</dbReference>
<dbReference type="InterPro" id="IPR050359">
    <property type="entry name" value="bHLH_transcription_factors"/>
</dbReference>
<dbReference type="InterPro" id="IPR036638">
    <property type="entry name" value="HLH_DNA-bd_sf"/>
</dbReference>
<dbReference type="PANTHER" id="PTHR19290">
    <property type="entry name" value="BASIC HELIX-LOOP-HELIX PROTEIN NEUROGENIN-RELATED"/>
    <property type="match status" value="1"/>
</dbReference>
<dbReference type="PANTHER" id="PTHR19290:SF162">
    <property type="entry name" value="TRANSCRIPTION FACTOR ATOH7"/>
    <property type="match status" value="1"/>
</dbReference>
<dbReference type="Pfam" id="PF00010">
    <property type="entry name" value="HLH"/>
    <property type="match status" value="1"/>
</dbReference>
<dbReference type="SMART" id="SM00353">
    <property type="entry name" value="HLH"/>
    <property type="match status" value="1"/>
</dbReference>
<dbReference type="SUPFAM" id="SSF47459">
    <property type="entry name" value="HLH, helix-loop-helix DNA-binding domain"/>
    <property type="match status" value="1"/>
</dbReference>
<dbReference type="PROSITE" id="PS50888">
    <property type="entry name" value="BHLH"/>
    <property type="match status" value="1"/>
</dbReference>
<evidence type="ECO:0000250" key="1">
    <source>
        <dbReference type="UniProtKB" id="Q8N100"/>
    </source>
</evidence>
<evidence type="ECO:0000250" key="2">
    <source>
        <dbReference type="UniProtKB" id="Q9Z2E5"/>
    </source>
</evidence>
<evidence type="ECO:0000255" key="3">
    <source>
        <dbReference type="PROSITE-ProRule" id="PRU00981"/>
    </source>
</evidence>
<evidence type="ECO:0000256" key="4">
    <source>
        <dbReference type="SAM" id="MobiDB-lite"/>
    </source>
</evidence>
<evidence type="ECO:0000269" key="5">
    <source>
    </source>
</evidence>
<evidence type="ECO:0000269" key="6">
    <source>
    </source>
</evidence>
<evidence type="ECO:0000303" key="7">
    <source>
    </source>
</evidence>
<evidence type="ECO:0000305" key="8"/>
<name>ATOH7_DANRE</name>
<organism>
    <name type="scientific">Danio rerio</name>
    <name type="common">Zebrafish</name>
    <name type="synonym">Brachydanio rerio</name>
    <dbReference type="NCBI Taxonomy" id="7955"/>
    <lineage>
        <taxon>Eukaryota</taxon>
        <taxon>Metazoa</taxon>
        <taxon>Chordata</taxon>
        <taxon>Craniata</taxon>
        <taxon>Vertebrata</taxon>
        <taxon>Euteleostomi</taxon>
        <taxon>Actinopterygii</taxon>
        <taxon>Neopterygii</taxon>
        <taxon>Teleostei</taxon>
        <taxon>Ostariophysi</taxon>
        <taxon>Cypriniformes</taxon>
        <taxon>Danionidae</taxon>
        <taxon>Danioninae</taxon>
        <taxon>Danio</taxon>
    </lineage>
</organism>
<reference key="1">
    <citation type="journal article" date="2000" name="Neuron">
        <title>Midline signals regulate retinal neurogenesis in zebrafish.</title>
        <authorList>
            <person name="Masai I."/>
            <person name="Stemple D.L."/>
            <person name="Okamoto H."/>
            <person name="Wilson S.W."/>
        </authorList>
    </citation>
    <scope>NUCLEOTIDE SEQUENCE [MRNA]</scope>
    <scope>DEVELOPMENTAL STAGE</scope>
    <scope>FUNCTION</scope>
</reference>
<reference key="2">
    <citation type="journal article" date="2013" name="Nature">
        <title>The zebrafish reference genome sequence and its relationship to the human genome.</title>
        <authorList>
            <person name="Howe K."/>
            <person name="Clark M.D."/>
            <person name="Torroja C.F."/>
            <person name="Torrance J."/>
            <person name="Berthelot C."/>
            <person name="Muffato M."/>
            <person name="Collins J.E."/>
            <person name="Humphray S."/>
            <person name="McLaren K."/>
            <person name="Matthews L."/>
            <person name="McLaren S."/>
            <person name="Sealy I."/>
            <person name="Caccamo M."/>
            <person name="Churcher C."/>
            <person name="Scott C."/>
            <person name="Barrett J.C."/>
            <person name="Koch R."/>
            <person name="Rauch G.J."/>
            <person name="White S."/>
            <person name="Chow W."/>
            <person name="Kilian B."/>
            <person name="Quintais L.T."/>
            <person name="Guerra-Assuncao J.A."/>
            <person name="Zhou Y."/>
            <person name="Gu Y."/>
            <person name="Yen J."/>
            <person name="Vogel J.H."/>
            <person name="Eyre T."/>
            <person name="Redmond S."/>
            <person name="Banerjee R."/>
            <person name="Chi J."/>
            <person name="Fu B."/>
            <person name="Langley E."/>
            <person name="Maguire S.F."/>
            <person name="Laird G.K."/>
            <person name="Lloyd D."/>
            <person name="Kenyon E."/>
            <person name="Donaldson S."/>
            <person name="Sehra H."/>
            <person name="Almeida-King J."/>
            <person name="Loveland J."/>
            <person name="Trevanion S."/>
            <person name="Jones M."/>
            <person name="Quail M."/>
            <person name="Willey D."/>
            <person name="Hunt A."/>
            <person name="Burton J."/>
            <person name="Sims S."/>
            <person name="McLay K."/>
            <person name="Plumb B."/>
            <person name="Davis J."/>
            <person name="Clee C."/>
            <person name="Oliver K."/>
            <person name="Clark R."/>
            <person name="Riddle C."/>
            <person name="Elliot D."/>
            <person name="Threadgold G."/>
            <person name="Harden G."/>
            <person name="Ware D."/>
            <person name="Begum S."/>
            <person name="Mortimore B."/>
            <person name="Kerry G."/>
            <person name="Heath P."/>
            <person name="Phillimore B."/>
            <person name="Tracey A."/>
            <person name="Corby N."/>
            <person name="Dunn M."/>
            <person name="Johnson C."/>
            <person name="Wood J."/>
            <person name="Clark S."/>
            <person name="Pelan S."/>
            <person name="Griffiths G."/>
            <person name="Smith M."/>
            <person name="Glithero R."/>
            <person name="Howden P."/>
            <person name="Barker N."/>
            <person name="Lloyd C."/>
            <person name="Stevens C."/>
            <person name="Harley J."/>
            <person name="Holt K."/>
            <person name="Panagiotidis G."/>
            <person name="Lovell J."/>
            <person name="Beasley H."/>
            <person name="Henderson C."/>
            <person name="Gordon D."/>
            <person name="Auger K."/>
            <person name="Wright D."/>
            <person name="Collins J."/>
            <person name="Raisen C."/>
            <person name="Dyer L."/>
            <person name="Leung K."/>
            <person name="Robertson L."/>
            <person name="Ambridge K."/>
            <person name="Leongamornlert D."/>
            <person name="McGuire S."/>
            <person name="Gilderthorp R."/>
            <person name="Griffiths C."/>
            <person name="Manthravadi D."/>
            <person name="Nichol S."/>
            <person name="Barker G."/>
            <person name="Whitehead S."/>
            <person name="Kay M."/>
            <person name="Brown J."/>
            <person name="Murnane C."/>
            <person name="Gray E."/>
            <person name="Humphries M."/>
            <person name="Sycamore N."/>
            <person name="Barker D."/>
            <person name="Saunders D."/>
            <person name="Wallis J."/>
            <person name="Babbage A."/>
            <person name="Hammond S."/>
            <person name="Mashreghi-Mohammadi M."/>
            <person name="Barr L."/>
            <person name="Martin S."/>
            <person name="Wray P."/>
            <person name="Ellington A."/>
            <person name="Matthews N."/>
            <person name="Ellwood M."/>
            <person name="Woodmansey R."/>
            <person name="Clark G."/>
            <person name="Cooper J."/>
            <person name="Tromans A."/>
            <person name="Grafham D."/>
            <person name="Skuce C."/>
            <person name="Pandian R."/>
            <person name="Andrews R."/>
            <person name="Harrison E."/>
            <person name="Kimberley A."/>
            <person name="Garnett J."/>
            <person name="Fosker N."/>
            <person name="Hall R."/>
            <person name="Garner P."/>
            <person name="Kelly D."/>
            <person name="Bird C."/>
            <person name="Palmer S."/>
            <person name="Gehring I."/>
            <person name="Berger A."/>
            <person name="Dooley C.M."/>
            <person name="Ersan-Urun Z."/>
            <person name="Eser C."/>
            <person name="Geiger H."/>
            <person name="Geisler M."/>
            <person name="Karotki L."/>
            <person name="Kirn A."/>
            <person name="Konantz J."/>
            <person name="Konantz M."/>
            <person name="Oberlander M."/>
            <person name="Rudolph-Geiger S."/>
            <person name="Teucke M."/>
            <person name="Lanz C."/>
            <person name="Raddatz G."/>
            <person name="Osoegawa K."/>
            <person name="Zhu B."/>
            <person name="Rapp A."/>
            <person name="Widaa S."/>
            <person name="Langford C."/>
            <person name="Yang F."/>
            <person name="Schuster S.C."/>
            <person name="Carter N.P."/>
            <person name="Harrow J."/>
            <person name="Ning Z."/>
            <person name="Herrero J."/>
            <person name="Searle S.M."/>
            <person name="Enright A."/>
            <person name="Geisler R."/>
            <person name="Plasterk R.H."/>
            <person name="Lee C."/>
            <person name="Westerfield M."/>
            <person name="de Jong P.J."/>
            <person name="Zon L.I."/>
            <person name="Postlethwait J.H."/>
            <person name="Nusslein-Volhard C."/>
            <person name="Hubbard T.J."/>
            <person name="Roest Crollius H."/>
            <person name="Rogers J."/>
            <person name="Stemple D.L."/>
        </authorList>
    </citation>
    <scope>NUCLEOTIDE SEQUENCE [LARGE SCALE GENOMIC DNA]</scope>
    <source>
        <strain>Tuebingen</strain>
    </source>
</reference>
<reference key="3">
    <citation type="submission" date="2004-06" db="EMBL/GenBank/DDBJ databases">
        <authorList>
            <consortium name="NIH - Zebrafish Gene Collection (ZGC) project"/>
        </authorList>
    </citation>
    <scope>NUCLEOTIDE SEQUENCE [LARGE SCALE MRNA]</scope>
    <source>
        <tissue>Embryo</tissue>
    </source>
</reference>
<reference key="4">
    <citation type="journal article" date="2001" name="Neuron">
        <title>Retinal ganglion cell genesis requires lakritz, a zebrafish atonal homolog.</title>
        <authorList>
            <person name="Kay J.N."/>
            <person name="Finger-Baier K.C."/>
            <person name="Roeser T."/>
            <person name="Staub W."/>
            <person name="Baier H."/>
        </authorList>
    </citation>
    <scope>FUNCTION</scope>
    <scope>MUTAGENESIS OF LEU-44</scope>
</reference>
<comment type="function">
    <text evidence="2 5 6">Transcription factor that binds to DNA at the consensus sequence 5'-CAG[GC]TG-3' (By similarity). Involved in the differentiation of retinal ganglion cells, photoreceptor population and optic nerve development (PubMed:10985346, PubMed:11430806). Required for retinal circadian rhythm photoentrainment (By similarity).</text>
</comment>
<comment type="subcellular location">
    <subcellularLocation>
        <location evidence="1">Nucleus</location>
    </subcellularLocation>
    <subcellularLocation>
        <location evidence="2">Perikaryon</location>
    </subcellularLocation>
    <subcellularLocation>
        <location evidence="2">Cell projection</location>
        <location evidence="2">Axon</location>
    </subcellularLocation>
</comment>
<comment type="developmental stage">
    <text evidence="5">Expressed in the developing retina.</text>
</comment>
<feature type="chain" id="PRO_0000292408" description="Transcription factor atoh7">
    <location>
        <begin position="1"/>
        <end position="134"/>
    </location>
</feature>
<feature type="domain" description="bHLH" evidence="3">
    <location>
        <begin position="28"/>
        <end position="80"/>
    </location>
</feature>
<feature type="region of interest" description="Disordered" evidence="4">
    <location>
        <begin position="1"/>
        <end position="27"/>
    </location>
</feature>
<feature type="compositionally biased region" description="Basic and acidic residues" evidence="4">
    <location>
        <begin position="15"/>
        <end position="27"/>
    </location>
</feature>
<feature type="mutagenesis site" description="In th241; no retinal ganglion cells." evidence="6">
    <original>L</original>
    <variation>P</variation>
    <location>
        <position position="44"/>
    </location>
</feature>
<feature type="sequence conflict" description="In Ref. 1; BAB15953." evidence="8" ref="1">
    <original>M</original>
    <variation>T</variation>
    <location>
        <position position="123"/>
    </location>
</feature>
<proteinExistence type="evidence at protein level"/>